<accession>A9ULG4</accession>
<reference key="1">
    <citation type="submission" date="2007-12" db="EMBL/GenBank/DDBJ databases">
        <authorList>
            <consortium name="NIH - Xenopus Gene Collection (XGC) project"/>
        </authorList>
    </citation>
    <scope>NUCLEOTIDE SEQUENCE [LARGE SCALE MRNA]</scope>
    <source>
        <strain>N6</strain>
        <tissue>Lung</tissue>
    </source>
</reference>
<organism>
    <name type="scientific">Xenopus tropicalis</name>
    <name type="common">Western clawed frog</name>
    <name type="synonym">Silurana tropicalis</name>
    <dbReference type="NCBI Taxonomy" id="8364"/>
    <lineage>
        <taxon>Eukaryota</taxon>
        <taxon>Metazoa</taxon>
        <taxon>Chordata</taxon>
        <taxon>Craniata</taxon>
        <taxon>Vertebrata</taxon>
        <taxon>Euteleostomi</taxon>
        <taxon>Amphibia</taxon>
        <taxon>Batrachia</taxon>
        <taxon>Anura</taxon>
        <taxon>Pipoidea</taxon>
        <taxon>Pipidae</taxon>
        <taxon>Xenopodinae</taxon>
        <taxon>Xenopus</taxon>
        <taxon>Silurana</taxon>
    </lineage>
</organism>
<sequence length="403" mass="45389">MEQPSVESLLELRRFPRKQLSLILLLLYSPLGLCLFLIRLFIGAHVFLVSCVLPDSVFRRFLLRVMSSVLGVYVSHSALRPLERRGKILICNHRTDFDHNIISLIAPCCSPSLSCAPGFLCWARGFLELGALGSRTQLMESLKHYLSQPGGGPLLLFPEEETTSGRTGLLHFSSWPFSLSDSVQPLTLTVQRPLVAAAVSGCSWVTELFWLLFIPFTVYQVRWLPPVTRHTRESDEEFAFRVQQMMAGSLGVAATRHTGADRAEYLKRRRTELPRSAPRSVPLSPTQMQMAQHVKEVLPQVPLSAIHRDLGHTGCIDTTITNFLEGRVTFLPEEETLGGNEATERTPLDRISRPLPRGFAKSPEVRHLSLQERKEALYECARRKYLEKFGSVGREEEEKGARG</sequence>
<dbReference type="EMBL" id="BC157245">
    <property type="protein sequence ID" value="AAI57246.1"/>
    <property type="molecule type" value="mRNA"/>
</dbReference>
<dbReference type="RefSeq" id="NP_001107375.1">
    <property type="nucleotide sequence ID" value="NM_001113903.1"/>
</dbReference>
<dbReference type="SMR" id="A9ULG4"/>
<dbReference type="FunCoup" id="A9ULG4">
    <property type="interactions" value="1730"/>
</dbReference>
<dbReference type="STRING" id="8364.ENSXETP00000034618"/>
<dbReference type="PaxDb" id="8364-ENSXETP00000058668"/>
<dbReference type="GeneID" id="100135201"/>
<dbReference type="KEGG" id="xtr:100135201"/>
<dbReference type="AGR" id="Xenbase:XB-GENE-6457109"/>
<dbReference type="CTD" id="550"/>
<dbReference type="Xenbase" id="XB-GENE-6457109">
    <property type="gene designation" value="aup1"/>
</dbReference>
<dbReference type="eggNOG" id="KOG2898">
    <property type="taxonomic scope" value="Eukaryota"/>
</dbReference>
<dbReference type="InParanoid" id="A9ULG4"/>
<dbReference type="OMA" id="KFNSWPF"/>
<dbReference type="OrthoDB" id="1854593at2759"/>
<dbReference type="Proteomes" id="UP000008143">
    <property type="component" value="Chromosome 1"/>
</dbReference>
<dbReference type="GO" id="GO:0005789">
    <property type="term" value="C:endoplasmic reticulum membrane"/>
    <property type="evidence" value="ECO:0000250"/>
    <property type="project" value="UniProtKB"/>
</dbReference>
<dbReference type="GO" id="GO:0005811">
    <property type="term" value="C:lipid droplet"/>
    <property type="evidence" value="ECO:0000250"/>
    <property type="project" value="UniProtKB"/>
</dbReference>
<dbReference type="GO" id="GO:0043130">
    <property type="term" value="F:ubiquitin binding"/>
    <property type="evidence" value="ECO:0007669"/>
    <property type="project" value="InterPro"/>
</dbReference>
<dbReference type="GO" id="GO:0036503">
    <property type="term" value="P:ERAD pathway"/>
    <property type="evidence" value="ECO:0000250"/>
    <property type="project" value="UniProtKB"/>
</dbReference>
<dbReference type="GO" id="GO:0140042">
    <property type="term" value="P:lipid droplet formation"/>
    <property type="evidence" value="ECO:0000250"/>
    <property type="project" value="UniProtKB"/>
</dbReference>
<dbReference type="GO" id="GO:0034389">
    <property type="term" value="P:lipid droplet organization"/>
    <property type="evidence" value="ECO:0000250"/>
    <property type="project" value="UniProtKB"/>
</dbReference>
<dbReference type="GO" id="GO:1990044">
    <property type="term" value="P:protein localization to lipid droplet"/>
    <property type="evidence" value="ECO:0000250"/>
    <property type="project" value="UniProtKB"/>
</dbReference>
<dbReference type="CDD" id="cd14420">
    <property type="entry name" value="CUE_AUP1"/>
    <property type="match status" value="1"/>
</dbReference>
<dbReference type="FunFam" id="1.10.8.10:FF:000049">
    <property type="entry name" value="ancient ubiquitous protein 1 isoform X2"/>
    <property type="match status" value="1"/>
</dbReference>
<dbReference type="Gene3D" id="1.10.8.10">
    <property type="entry name" value="DNA helicase RuvA subunit, C-terminal domain"/>
    <property type="match status" value="1"/>
</dbReference>
<dbReference type="InterPro" id="IPR048056">
    <property type="entry name" value="AUP1_CUE"/>
</dbReference>
<dbReference type="InterPro" id="IPR003892">
    <property type="entry name" value="CUE"/>
</dbReference>
<dbReference type="PANTHER" id="PTHR15486">
    <property type="entry name" value="ANCIENT UBIQUITOUS PROTEIN"/>
    <property type="match status" value="1"/>
</dbReference>
<dbReference type="PANTHER" id="PTHR15486:SF96">
    <property type="entry name" value="LIPID DROPLET-REGULATING VLDL ASSEMBLY FACTOR AUP1"/>
    <property type="match status" value="1"/>
</dbReference>
<dbReference type="Pfam" id="PF02845">
    <property type="entry name" value="CUE"/>
    <property type="match status" value="1"/>
</dbReference>
<dbReference type="SMART" id="SM00546">
    <property type="entry name" value="CUE"/>
    <property type="match status" value="1"/>
</dbReference>
<dbReference type="SUPFAM" id="SSF69593">
    <property type="entry name" value="Glycerol-3-phosphate (1)-acyltransferase"/>
    <property type="match status" value="1"/>
</dbReference>
<dbReference type="PROSITE" id="PS51140">
    <property type="entry name" value="CUE"/>
    <property type="match status" value="1"/>
</dbReference>
<proteinExistence type="evidence at transcript level"/>
<gene>
    <name evidence="1" type="primary">aup1</name>
</gene>
<keyword id="KW-0256">Endoplasmic reticulum</keyword>
<keyword id="KW-0551">Lipid droplet</keyword>
<keyword id="KW-0472">Membrane</keyword>
<keyword id="KW-1185">Reference proteome</keyword>
<feature type="chain" id="PRO_0000359873" description="Lipid droplet-regulating VLDL assembly factor AUP1">
    <location>
        <begin position="1"/>
        <end position="403"/>
    </location>
</feature>
<feature type="topological domain" description="Cytoplasmic" evidence="1">
    <location>
        <begin position="1"/>
        <end position="21"/>
    </location>
</feature>
<feature type="intramembrane region" evidence="1">
    <location>
        <begin position="22"/>
        <end position="42"/>
    </location>
</feature>
<feature type="topological domain" description="Cytoplasmic" evidence="1">
    <location>
        <begin position="43"/>
        <end position="399"/>
    </location>
</feature>
<feature type="domain" description="CUE" evidence="2">
    <location>
        <begin position="286"/>
        <end position="328"/>
    </location>
</feature>
<evidence type="ECO:0000250" key="1">
    <source>
        <dbReference type="UniProtKB" id="Q9Y679"/>
    </source>
</evidence>
<evidence type="ECO:0000255" key="2">
    <source>
        <dbReference type="PROSITE-ProRule" id="PRU00468"/>
    </source>
</evidence>
<evidence type="ECO:0000305" key="3"/>
<name>AUP1_XENTR</name>
<protein>
    <recommendedName>
        <fullName evidence="1">Lipid droplet-regulating VLDL assembly factor AUP1</fullName>
    </recommendedName>
    <alternativeName>
        <fullName evidence="1">Ancient ubiquitous protein 1</fullName>
    </alternativeName>
</protein>
<comment type="function">
    <text evidence="1">Plays a role in the translocation of terminally misfolded proteins from the endoplasmic reticulum lumen to the cytoplasm and their degradation by the proteasome (By similarity). Plays a role in lipid droplet formation (By similarity). Induces lipid droplet clustering (By similarity).</text>
</comment>
<comment type="subcellular location">
    <subcellularLocation>
        <location evidence="1">Endoplasmic reticulum membrane</location>
        <topology evidence="1">Peripheral membrane protein</topology>
    </subcellularLocation>
    <subcellularLocation>
        <location evidence="1">Lipid droplet</location>
    </subcellularLocation>
</comment>
<comment type="similarity">
    <text evidence="3">Belongs to the AUP1 family.</text>
</comment>